<name>MUTL_CALS4</name>
<feature type="chain" id="PRO_0000177987" description="DNA mismatch repair protein MutL">
    <location>
        <begin position="1"/>
        <end position="590"/>
    </location>
</feature>
<gene>
    <name evidence="1" type="primary">mutL</name>
    <name type="ordered locus">TTE1358</name>
</gene>
<dbReference type="EMBL" id="AE008691">
    <property type="protein sequence ID" value="AAM24580.1"/>
    <property type="molecule type" value="Genomic_DNA"/>
</dbReference>
<dbReference type="RefSeq" id="WP_011025653.1">
    <property type="nucleotide sequence ID" value="NC_003869.1"/>
</dbReference>
<dbReference type="SMR" id="Q8RA70"/>
<dbReference type="STRING" id="273068.TTE1358"/>
<dbReference type="KEGG" id="tte:TTE1358"/>
<dbReference type="eggNOG" id="COG0323">
    <property type="taxonomic scope" value="Bacteria"/>
</dbReference>
<dbReference type="HOGENOM" id="CLU_004131_4_1_9"/>
<dbReference type="OrthoDB" id="9763467at2"/>
<dbReference type="Proteomes" id="UP000000555">
    <property type="component" value="Chromosome"/>
</dbReference>
<dbReference type="GO" id="GO:0032300">
    <property type="term" value="C:mismatch repair complex"/>
    <property type="evidence" value="ECO:0007669"/>
    <property type="project" value="InterPro"/>
</dbReference>
<dbReference type="GO" id="GO:0005524">
    <property type="term" value="F:ATP binding"/>
    <property type="evidence" value="ECO:0007669"/>
    <property type="project" value="InterPro"/>
</dbReference>
<dbReference type="GO" id="GO:0016887">
    <property type="term" value="F:ATP hydrolysis activity"/>
    <property type="evidence" value="ECO:0007669"/>
    <property type="project" value="InterPro"/>
</dbReference>
<dbReference type="GO" id="GO:0140664">
    <property type="term" value="F:ATP-dependent DNA damage sensor activity"/>
    <property type="evidence" value="ECO:0007669"/>
    <property type="project" value="InterPro"/>
</dbReference>
<dbReference type="GO" id="GO:0030983">
    <property type="term" value="F:mismatched DNA binding"/>
    <property type="evidence" value="ECO:0007669"/>
    <property type="project" value="InterPro"/>
</dbReference>
<dbReference type="GO" id="GO:0006298">
    <property type="term" value="P:mismatch repair"/>
    <property type="evidence" value="ECO:0007669"/>
    <property type="project" value="UniProtKB-UniRule"/>
</dbReference>
<dbReference type="CDD" id="cd16926">
    <property type="entry name" value="HATPase_MutL-MLH-PMS-like"/>
    <property type="match status" value="1"/>
</dbReference>
<dbReference type="CDD" id="cd00782">
    <property type="entry name" value="MutL_Trans"/>
    <property type="match status" value="1"/>
</dbReference>
<dbReference type="FunFam" id="3.30.565.10:FF:000003">
    <property type="entry name" value="DNA mismatch repair endonuclease MutL"/>
    <property type="match status" value="1"/>
</dbReference>
<dbReference type="Gene3D" id="3.30.230.10">
    <property type="match status" value="1"/>
</dbReference>
<dbReference type="Gene3D" id="3.30.565.10">
    <property type="entry name" value="Histidine kinase-like ATPase, C-terminal domain"/>
    <property type="match status" value="1"/>
</dbReference>
<dbReference type="Gene3D" id="3.30.1540.20">
    <property type="entry name" value="MutL, C-terminal domain, dimerisation subdomain"/>
    <property type="match status" value="1"/>
</dbReference>
<dbReference type="Gene3D" id="3.30.1370.100">
    <property type="entry name" value="MutL, C-terminal domain, regulatory subdomain"/>
    <property type="match status" value="1"/>
</dbReference>
<dbReference type="HAMAP" id="MF_00149">
    <property type="entry name" value="DNA_mis_repair"/>
    <property type="match status" value="1"/>
</dbReference>
<dbReference type="InterPro" id="IPR014762">
    <property type="entry name" value="DNA_mismatch_repair_CS"/>
</dbReference>
<dbReference type="InterPro" id="IPR020667">
    <property type="entry name" value="DNA_mismatch_repair_MutL"/>
</dbReference>
<dbReference type="InterPro" id="IPR013507">
    <property type="entry name" value="DNA_mismatch_S5_2-like"/>
</dbReference>
<dbReference type="InterPro" id="IPR036890">
    <property type="entry name" value="HATPase_C_sf"/>
</dbReference>
<dbReference type="InterPro" id="IPR002099">
    <property type="entry name" value="MutL/Mlh/PMS"/>
</dbReference>
<dbReference type="InterPro" id="IPR038973">
    <property type="entry name" value="MutL/Mlh/Pms-like"/>
</dbReference>
<dbReference type="InterPro" id="IPR014790">
    <property type="entry name" value="MutL_C"/>
</dbReference>
<dbReference type="InterPro" id="IPR042120">
    <property type="entry name" value="MutL_C_dimsub"/>
</dbReference>
<dbReference type="InterPro" id="IPR042121">
    <property type="entry name" value="MutL_C_regsub"/>
</dbReference>
<dbReference type="InterPro" id="IPR037198">
    <property type="entry name" value="MutL_C_sf"/>
</dbReference>
<dbReference type="InterPro" id="IPR020568">
    <property type="entry name" value="Ribosomal_Su5_D2-typ_SF"/>
</dbReference>
<dbReference type="InterPro" id="IPR014721">
    <property type="entry name" value="Ribsml_uS5_D2-typ_fold_subgr"/>
</dbReference>
<dbReference type="NCBIfam" id="TIGR00585">
    <property type="entry name" value="mutl"/>
    <property type="match status" value="1"/>
</dbReference>
<dbReference type="PANTHER" id="PTHR10073">
    <property type="entry name" value="DNA MISMATCH REPAIR PROTEIN MLH, PMS, MUTL"/>
    <property type="match status" value="1"/>
</dbReference>
<dbReference type="PANTHER" id="PTHR10073:SF12">
    <property type="entry name" value="DNA MISMATCH REPAIR PROTEIN MLH1"/>
    <property type="match status" value="1"/>
</dbReference>
<dbReference type="Pfam" id="PF01119">
    <property type="entry name" value="DNA_mis_repair"/>
    <property type="match status" value="1"/>
</dbReference>
<dbReference type="Pfam" id="PF13589">
    <property type="entry name" value="HATPase_c_3"/>
    <property type="match status" value="1"/>
</dbReference>
<dbReference type="Pfam" id="PF08676">
    <property type="entry name" value="MutL_C"/>
    <property type="match status" value="1"/>
</dbReference>
<dbReference type="SMART" id="SM01340">
    <property type="entry name" value="DNA_mis_repair"/>
    <property type="match status" value="1"/>
</dbReference>
<dbReference type="SMART" id="SM00853">
    <property type="entry name" value="MutL_C"/>
    <property type="match status" value="1"/>
</dbReference>
<dbReference type="SUPFAM" id="SSF55874">
    <property type="entry name" value="ATPase domain of HSP90 chaperone/DNA topoisomerase II/histidine kinase"/>
    <property type="match status" value="1"/>
</dbReference>
<dbReference type="SUPFAM" id="SSF118116">
    <property type="entry name" value="DNA mismatch repair protein MutL"/>
    <property type="match status" value="1"/>
</dbReference>
<dbReference type="SUPFAM" id="SSF54211">
    <property type="entry name" value="Ribosomal protein S5 domain 2-like"/>
    <property type="match status" value="1"/>
</dbReference>
<dbReference type="PROSITE" id="PS00058">
    <property type="entry name" value="DNA_MISMATCH_REPAIR_1"/>
    <property type="match status" value="1"/>
</dbReference>
<organism>
    <name type="scientific">Caldanaerobacter subterraneus subsp. tengcongensis (strain DSM 15242 / JCM 11007 / NBRC 100824 / MB4)</name>
    <name type="common">Thermoanaerobacter tengcongensis</name>
    <dbReference type="NCBI Taxonomy" id="273068"/>
    <lineage>
        <taxon>Bacteria</taxon>
        <taxon>Bacillati</taxon>
        <taxon>Bacillota</taxon>
        <taxon>Clostridia</taxon>
        <taxon>Thermoanaerobacterales</taxon>
        <taxon>Thermoanaerobacteraceae</taxon>
        <taxon>Caldanaerobacter</taxon>
    </lineage>
</organism>
<proteinExistence type="inferred from homology"/>
<protein>
    <recommendedName>
        <fullName evidence="1">DNA mismatch repair protein MutL</fullName>
    </recommendedName>
</protein>
<comment type="function">
    <text evidence="1">This protein is involved in the repair of mismatches in DNA. It is required for dam-dependent methyl-directed DNA mismatch repair. May act as a 'molecular matchmaker', a protein that promotes the formation of a stable complex between two or more DNA-binding proteins in an ATP-dependent manner without itself being part of a final effector complex.</text>
</comment>
<comment type="similarity">
    <text evidence="1">Belongs to the DNA mismatch repair MutL/HexB family.</text>
</comment>
<sequence length="590" mass="67196">MNKIHLLDEKTVNKIAAGEVVERPASIVKELVENSIDAGSKNITVEILEGGIPYIKVTDDGCGMNEIDAVLAFERHATSKIRSDEDLFNITTLGFRGEALASIAAVSKVVLQTKEENETFGTRLVVEGGKILEKTRCGCQKGTSVEVKDVFFNTPARRKFLKRPSTEAMYVTEVVTRLCLSNPGISFKYVKDKKVQFITSGNGSIEDVILRLFGKEVHSALIFSEFEAEDLKVKAFATKNFLNYSNRNMQFFYVNGRYVKNKTLSAAVDEAFKTYVPSDRYPGVFLYLEINPRFIDVNIHPSKLEVKFSDDRRIFESVYRTIREALRESNLIPEVKLEKDLKNEEGQIGEQVKLSLPLFEVKEKTDDGAIFVREEVKTEEKIDKAPKHESSSDSERNVKRLSDIRIVGTLFSTYVIVEKGDVFYIIDQHAAHERILYEKLVSQYERVQSRQVTFPIVVELQPGDMEIVGQERELLYKLGYVFEEFGNNSVVLREVPVILGQPEAKKLFVEIVERLRDKDFSSKVSFKEEEIATMACKAAVKAMDTLSENEIYKLFEDLKIAENPYTCPHGRPVIISMTKTQLEKMFKRIK</sequence>
<evidence type="ECO:0000255" key="1">
    <source>
        <dbReference type="HAMAP-Rule" id="MF_00149"/>
    </source>
</evidence>
<reference key="1">
    <citation type="journal article" date="2002" name="Genome Res.">
        <title>A complete sequence of the T. tengcongensis genome.</title>
        <authorList>
            <person name="Bao Q."/>
            <person name="Tian Y."/>
            <person name="Li W."/>
            <person name="Xu Z."/>
            <person name="Xuan Z."/>
            <person name="Hu S."/>
            <person name="Dong W."/>
            <person name="Yang J."/>
            <person name="Chen Y."/>
            <person name="Xue Y."/>
            <person name="Xu Y."/>
            <person name="Lai X."/>
            <person name="Huang L."/>
            <person name="Dong X."/>
            <person name="Ma Y."/>
            <person name="Ling L."/>
            <person name="Tan H."/>
            <person name="Chen R."/>
            <person name="Wang J."/>
            <person name="Yu J."/>
            <person name="Yang H."/>
        </authorList>
    </citation>
    <scope>NUCLEOTIDE SEQUENCE [LARGE SCALE GENOMIC DNA]</scope>
    <source>
        <strain>DSM 15242 / JCM 11007 / NBRC 100824 / MB4</strain>
    </source>
</reference>
<accession>Q8RA70</accession>
<keyword id="KW-0227">DNA damage</keyword>
<keyword id="KW-0234">DNA repair</keyword>
<keyword id="KW-1185">Reference proteome</keyword>